<gene>
    <name evidence="1" type="primary">psbJ</name>
</gene>
<comment type="function">
    <text evidence="1">One of the components of the core complex of photosystem II (PSII). PSII is a light-driven water:plastoquinone oxidoreductase that uses light energy to abstract electrons from H(2)O, generating O(2) and a proton gradient subsequently used for ATP formation. It consists of a core antenna complex that captures photons, and an electron transfer chain that converts photonic excitation into a charge separation.</text>
</comment>
<comment type="subunit">
    <text evidence="1">PSII is composed of 1 copy each of membrane proteins PsbA, PsbB, PsbC, PsbD, PsbE, PsbF, PsbH, PsbI, PsbJ, PsbK, PsbL, PsbM, PsbT, PsbX, PsbY, PsbZ, Psb30/Ycf12, at least 3 peripheral proteins of the oxygen-evolving complex and a large number of cofactors. It forms dimeric complexes.</text>
</comment>
<comment type="subcellular location">
    <subcellularLocation>
        <location evidence="1">Plastid</location>
        <location evidence="1">Chloroplast thylakoid membrane</location>
        <topology evidence="1">Single-pass membrane protein</topology>
    </subcellularLocation>
</comment>
<comment type="similarity">
    <text evidence="1">Belongs to the PsbJ family.</text>
</comment>
<evidence type="ECO:0000255" key="1">
    <source>
        <dbReference type="HAMAP-Rule" id="MF_01305"/>
    </source>
</evidence>
<organism>
    <name type="scientific">Physcomitrium patens</name>
    <name type="common">Spreading-leaved earth moss</name>
    <name type="synonym">Physcomitrella patens</name>
    <dbReference type="NCBI Taxonomy" id="3218"/>
    <lineage>
        <taxon>Eukaryota</taxon>
        <taxon>Viridiplantae</taxon>
        <taxon>Streptophyta</taxon>
        <taxon>Embryophyta</taxon>
        <taxon>Bryophyta</taxon>
        <taxon>Bryophytina</taxon>
        <taxon>Bryopsida</taxon>
        <taxon>Funariidae</taxon>
        <taxon>Funariales</taxon>
        <taxon>Funariaceae</taxon>
        <taxon>Physcomitrium</taxon>
    </lineage>
</organism>
<feature type="chain" id="PRO_0000216610" description="Photosystem II reaction center protein J">
    <location>
        <begin position="1"/>
        <end position="40"/>
    </location>
</feature>
<feature type="transmembrane region" description="Helical" evidence="1">
    <location>
        <begin position="8"/>
        <end position="28"/>
    </location>
</feature>
<name>PSBJ_PHYPA</name>
<proteinExistence type="inferred from homology"/>
<reference key="1">
    <citation type="journal article" date="2003" name="Nucleic Acids Res.">
        <title>Complete chloroplast DNA sequence of the moss Physcomitrella patens: evidence for the loss and relocation of rpoA from the chloroplast to the nucleus.</title>
        <authorList>
            <person name="Sugiura C."/>
            <person name="Kobayashi Y."/>
            <person name="Setsuyuki A."/>
            <person name="Sugita C."/>
            <person name="Sugita M."/>
        </authorList>
    </citation>
    <scope>NUCLEOTIDE SEQUENCE [LARGE SCALE GENOMIC DNA]</scope>
    <source>
        <strain>cv. Gransden 2004</strain>
    </source>
</reference>
<protein>
    <recommendedName>
        <fullName evidence="1">Photosystem II reaction center protein J</fullName>
        <shortName evidence="1">PSII-J</shortName>
    </recommendedName>
</protein>
<geneLocation type="chloroplast"/>
<accession>Q6YXL6</accession>
<dbReference type="EMBL" id="AP005672">
    <property type="protein sequence ID" value="BAC85036.1"/>
    <property type="molecule type" value="Genomic_DNA"/>
</dbReference>
<dbReference type="RefSeq" id="NP_904186.1">
    <property type="nucleotide sequence ID" value="NC_005087.2"/>
</dbReference>
<dbReference type="RefSeq" id="YP_009477517.1">
    <property type="nucleotide sequence ID" value="NC_037465.1"/>
</dbReference>
<dbReference type="SMR" id="Q6YXL6"/>
<dbReference type="FunCoup" id="Q6YXL6">
    <property type="interactions" value="39"/>
</dbReference>
<dbReference type="STRING" id="3218.Q6YXL6"/>
<dbReference type="GeneID" id="2546770"/>
<dbReference type="GeneID" id="36487131"/>
<dbReference type="KEGG" id="ppp:2546770"/>
<dbReference type="InParanoid" id="Q6YXL6"/>
<dbReference type="Proteomes" id="UP000006727">
    <property type="component" value="Chloroplast"/>
</dbReference>
<dbReference type="GO" id="GO:0009535">
    <property type="term" value="C:chloroplast thylakoid membrane"/>
    <property type="evidence" value="ECO:0007669"/>
    <property type="project" value="UniProtKB-SubCell"/>
</dbReference>
<dbReference type="GO" id="GO:0009523">
    <property type="term" value="C:photosystem II"/>
    <property type="evidence" value="ECO:0000318"/>
    <property type="project" value="GO_Central"/>
</dbReference>
<dbReference type="GO" id="GO:0009539">
    <property type="term" value="C:photosystem II reaction center"/>
    <property type="evidence" value="ECO:0007669"/>
    <property type="project" value="InterPro"/>
</dbReference>
<dbReference type="GO" id="GO:0015979">
    <property type="term" value="P:photosynthesis"/>
    <property type="evidence" value="ECO:0007669"/>
    <property type="project" value="UniProtKB-UniRule"/>
</dbReference>
<dbReference type="Gene3D" id="6.10.250.2070">
    <property type="match status" value="1"/>
</dbReference>
<dbReference type="HAMAP" id="MF_01305">
    <property type="entry name" value="PSII_PsbJ"/>
    <property type="match status" value="1"/>
</dbReference>
<dbReference type="InterPro" id="IPR002682">
    <property type="entry name" value="PSII_PsbJ"/>
</dbReference>
<dbReference type="InterPro" id="IPR037267">
    <property type="entry name" value="PSII_PsbJ_sf"/>
</dbReference>
<dbReference type="NCBIfam" id="NF002722">
    <property type="entry name" value="PRK02565.1"/>
    <property type="match status" value="1"/>
</dbReference>
<dbReference type="PANTHER" id="PTHR34812">
    <property type="entry name" value="PHOTOSYSTEM II REACTION CENTER PROTEIN J"/>
    <property type="match status" value="1"/>
</dbReference>
<dbReference type="PANTHER" id="PTHR34812:SF3">
    <property type="entry name" value="PHOTOSYSTEM II REACTION CENTER PROTEIN J"/>
    <property type="match status" value="1"/>
</dbReference>
<dbReference type="Pfam" id="PF01788">
    <property type="entry name" value="PsbJ"/>
    <property type="match status" value="1"/>
</dbReference>
<dbReference type="SUPFAM" id="SSF161021">
    <property type="entry name" value="Photosystem II reaction center protein J, PsbJ"/>
    <property type="match status" value="1"/>
</dbReference>
<sequence length="40" mass="4130">MANTTGRIPLWLIGTVAGILVLGLLGIFFYGSYSGLGSSL</sequence>
<keyword id="KW-0150">Chloroplast</keyword>
<keyword id="KW-0472">Membrane</keyword>
<keyword id="KW-0602">Photosynthesis</keyword>
<keyword id="KW-0604">Photosystem II</keyword>
<keyword id="KW-0934">Plastid</keyword>
<keyword id="KW-0674">Reaction center</keyword>
<keyword id="KW-1185">Reference proteome</keyword>
<keyword id="KW-0793">Thylakoid</keyword>
<keyword id="KW-0812">Transmembrane</keyword>
<keyword id="KW-1133">Transmembrane helix</keyword>